<keyword id="KW-1003">Cell membrane</keyword>
<keyword id="KW-0472">Membrane</keyword>
<keyword id="KW-1185">Reference proteome</keyword>
<keyword id="KW-0812">Transmembrane</keyword>
<keyword id="KW-1133">Transmembrane helix</keyword>
<reference key="1">
    <citation type="journal article" date="2004" name="Science">
        <title>The genomic sequence of the accidental pathogen Legionella pneumophila.</title>
        <authorList>
            <person name="Chien M."/>
            <person name="Morozova I."/>
            <person name="Shi S."/>
            <person name="Sheng H."/>
            <person name="Chen J."/>
            <person name="Gomez S.M."/>
            <person name="Asamani G."/>
            <person name="Hill K."/>
            <person name="Nuara J."/>
            <person name="Feder M."/>
            <person name="Rineer J."/>
            <person name="Greenberg J.J."/>
            <person name="Steshenko V."/>
            <person name="Park S.H."/>
            <person name="Zhao B."/>
            <person name="Teplitskaya E."/>
            <person name="Edwards J.R."/>
            <person name="Pampou S."/>
            <person name="Georghiou A."/>
            <person name="Chou I.-C."/>
            <person name="Iannuccilli W."/>
            <person name="Ulz M.E."/>
            <person name="Kim D.H."/>
            <person name="Geringer-Sameth A."/>
            <person name="Goldsberry C."/>
            <person name="Morozov P."/>
            <person name="Fischer S.G."/>
            <person name="Segal G."/>
            <person name="Qu X."/>
            <person name="Rzhetsky A."/>
            <person name="Zhang P."/>
            <person name="Cayanis E."/>
            <person name="De Jong P.J."/>
            <person name="Ju J."/>
            <person name="Kalachikov S."/>
            <person name="Shuman H.A."/>
            <person name="Russo J.J."/>
        </authorList>
    </citation>
    <scope>NUCLEOTIDE SEQUENCE [LARGE SCALE GENOMIC DNA]</scope>
    <source>
        <strain>Philadelphia 1 / ATCC 33152 / DSM 7513</strain>
    </source>
</reference>
<sequence length="59" mass="6285">MLSWALIFFIIAIIAAAFGFGGIAVAAAGIAKILFFLFLVMFVIFLIMGLLGRRGPPPV</sequence>
<feature type="chain" id="PRO_0000256746" description="UPF0391 membrane protein lpg2521">
    <location>
        <begin position="1"/>
        <end position="59"/>
    </location>
</feature>
<feature type="transmembrane region" description="Helical" evidence="1">
    <location>
        <begin position="5"/>
        <end position="25"/>
    </location>
</feature>
<feature type="transmembrane region" description="Helical" evidence="1">
    <location>
        <begin position="30"/>
        <end position="50"/>
    </location>
</feature>
<gene>
    <name type="ordered locus">lpg2521</name>
</gene>
<accession>Q5ZSJ6</accession>
<evidence type="ECO:0000255" key="1">
    <source>
        <dbReference type="HAMAP-Rule" id="MF_01361"/>
    </source>
</evidence>
<comment type="subcellular location">
    <subcellularLocation>
        <location evidence="1">Cell membrane</location>
        <topology evidence="1">Multi-pass membrane protein</topology>
    </subcellularLocation>
</comment>
<comment type="similarity">
    <text evidence="1">Belongs to the UPF0391 family.</text>
</comment>
<protein>
    <recommendedName>
        <fullName evidence="1">UPF0391 membrane protein lpg2521</fullName>
    </recommendedName>
</protein>
<proteinExistence type="inferred from homology"/>
<dbReference type="EMBL" id="AE017354">
    <property type="protein sequence ID" value="AAU28581.1"/>
    <property type="molecule type" value="Genomic_DNA"/>
</dbReference>
<dbReference type="RefSeq" id="WP_010948223.1">
    <property type="nucleotide sequence ID" value="NC_002942.5"/>
</dbReference>
<dbReference type="RefSeq" id="YP_096528.1">
    <property type="nucleotide sequence ID" value="NC_002942.5"/>
</dbReference>
<dbReference type="STRING" id="272624.lpg2521"/>
<dbReference type="PaxDb" id="272624-lpg2521"/>
<dbReference type="KEGG" id="lpn:lpg2521"/>
<dbReference type="PATRIC" id="fig|272624.6.peg.2679"/>
<dbReference type="eggNOG" id="COG5487">
    <property type="taxonomic scope" value="Bacteria"/>
</dbReference>
<dbReference type="HOGENOM" id="CLU_187346_1_0_6"/>
<dbReference type="Proteomes" id="UP000000609">
    <property type="component" value="Chromosome"/>
</dbReference>
<dbReference type="GO" id="GO:0005886">
    <property type="term" value="C:plasma membrane"/>
    <property type="evidence" value="ECO:0007669"/>
    <property type="project" value="UniProtKB-SubCell"/>
</dbReference>
<dbReference type="HAMAP" id="MF_01361">
    <property type="entry name" value="UPF0391"/>
    <property type="match status" value="1"/>
</dbReference>
<dbReference type="InterPro" id="IPR009760">
    <property type="entry name" value="DUF1328"/>
</dbReference>
<dbReference type="NCBIfam" id="NF010226">
    <property type="entry name" value="PRK13682.1-1"/>
    <property type="match status" value="1"/>
</dbReference>
<dbReference type="NCBIfam" id="NF010229">
    <property type="entry name" value="PRK13682.1-4"/>
    <property type="match status" value="1"/>
</dbReference>
<dbReference type="NCBIfam" id="NF010233">
    <property type="entry name" value="PRK13682.2-4"/>
    <property type="match status" value="1"/>
</dbReference>
<dbReference type="Pfam" id="PF07043">
    <property type="entry name" value="DUF1328"/>
    <property type="match status" value="1"/>
</dbReference>
<dbReference type="PIRSF" id="PIRSF036466">
    <property type="entry name" value="UCP036466"/>
    <property type="match status" value="1"/>
</dbReference>
<name>Y2521_LEGPH</name>
<organism>
    <name type="scientific">Legionella pneumophila subsp. pneumophila (strain Philadelphia 1 / ATCC 33152 / DSM 7513)</name>
    <dbReference type="NCBI Taxonomy" id="272624"/>
    <lineage>
        <taxon>Bacteria</taxon>
        <taxon>Pseudomonadati</taxon>
        <taxon>Pseudomonadota</taxon>
        <taxon>Gammaproteobacteria</taxon>
        <taxon>Legionellales</taxon>
        <taxon>Legionellaceae</taxon>
        <taxon>Legionella</taxon>
    </lineage>
</organism>